<comment type="similarity">
    <text evidence="1">Belongs to the UPF0270 family.</text>
</comment>
<gene>
    <name type="ordered locus">VS_2853</name>
</gene>
<feature type="chain" id="PRO_1000198191" description="UPF0270 protein VS_2853">
    <location>
        <begin position="1"/>
        <end position="70"/>
    </location>
</feature>
<name>Y2853_VIBA3</name>
<sequence length="70" mass="8041">MIIPWQDIAPETLENLIKEFVLREGTDYGDVEVSLQNKIDQVKHQLASGEVSIVFSELHETVDIQVTKRF</sequence>
<accession>B7VLH8</accession>
<reference key="1">
    <citation type="submission" date="2009-02" db="EMBL/GenBank/DDBJ databases">
        <title>Vibrio splendidus str. LGP32 complete genome.</title>
        <authorList>
            <person name="Mazel D."/>
            <person name="Le Roux F."/>
        </authorList>
    </citation>
    <scope>NUCLEOTIDE SEQUENCE [LARGE SCALE GENOMIC DNA]</scope>
    <source>
        <strain>LGP32</strain>
    </source>
</reference>
<organism>
    <name type="scientific">Vibrio atlanticus (strain LGP32)</name>
    <name type="common">Vibrio splendidus (strain Mel32)</name>
    <dbReference type="NCBI Taxonomy" id="575788"/>
    <lineage>
        <taxon>Bacteria</taxon>
        <taxon>Pseudomonadati</taxon>
        <taxon>Pseudomonadota</taxon>
        <taxon>Gammaproteobacteria</taxon>
        <taxon>Vibrionales</taxon>
        <taxon>Vibrionaceae</taxon>
        <taxon>Vibrio</taxon>
    </lineage>
</organism>
<protein>
    <recommendedName>
        <fullName evidence="1">UPF0270 protein VS_2853</fullName>
    </recommendedName>
</protein>
<evidence type="ECO:0000255" key="1">
    <source>
        <dbReference type="HAMAP-Rule" id="MF_00690"/>
    </source>
</evidence>
<dbReference type="EMBL" id="FM954972">
    <property type="protein sequence ID" value="CAV20146.1"/>
    <property type="molecule type" value="Genomic_DNA"/>
</dbReference>
<dbReference type="SMR" id="B7VLH8"/>
<dbReference type="STRING" id="575788.VS_2853"/>
<dbReference type="KEGG" id="vsp:VS_2853"/>
<dbReference type="eggNOG" id="COG3089">
    <property type="taxonomic scope" value="Bacteria"/>
</dbReference>
<dbReference type="HOGENOM" id="CLU_186759_2_0_6"/>
<dbReference type="Proteomes" id="UP000009100">
    <property type="component" value="Chromosome 1"/>
</dbReference>
<dbReference type="Gene3D" id="1.10.10.610">
    <property type="entry name" value="YehU-like"/>
    <property type="match status" value="1"/>
</dbReference>
<dbReference type="HAMAP" id="MF_00690">
    <property type="entry name" value="UPF0270"/>
    <property type="match status" value="1"/>
</dbReference>
<dbReference type="InterPro" id="IPR010648">
    <property type="entry name" value="UPF0270"/>
</dbReference>
<dbReference type="InterPro" id="IPR036685">
    <property type="entry name" value="YehU-like_sf"/>
</dbReference>
<dbReference type="NCBIfam" id="NF003438">
    <property type="entry name" value="PRK04966.1"/>
    <property type="match status" value="1"/>
</dbReference>
<dbReference type="Pfam" id="PF06794">
    <property type="entry name" value="UPF0270"/>
    <property type="match status" value="1"/>
</dbReference>
<dbReference type="PIRSF" id="PIRSF006169">
    <property type="entry name" value="UCP006169"/>
    <property type="match status" value="1"/>
</dbReference>
<dbReference type="SUPFAM" id="SSF118001">
    <property type="entry name" value="YehU-like"/>
    <property type="match status" value="1"/>
</dbReference>
<proteinExistence type="inferred from homology"/>